<gene>
    <name type="primary">flgG</name>
    <name type="synonym">flgE</name>
    <name type="ordered locus">BSU16290</name>
</gene>
<evidence type="ECO:0000250" key="1"/>
<evidence type="ECO:0000305" key="2"/>
<accession>P23446</accession>
<keyword id="KW-0975">Bacterial flagellum</keyword>
<keyword id="KW-1185">Reference proteome</keyword>
<feature type="chain" id="PRO_0000180843" description="Flagellar basal-body rod protein FlgG">
    <location>
        <begin position="1"/>
        <end position="264"/>
    </location>
</feature>
<feature type="sequence conflict" description="In Ref. 1; CAA39528." evidence="2" ref="1">
    <original>S</original>
    <variation>T</variation>
    <location>
        <position position="150"/>
    </location>
</feature>
<protein>
    <recommendedName>
        <fullName>Flagellar basal-body rod protein FlgG</fullName>
    </recommendedName>
    <alternativeName>
        <fullName>Distal rod protein</fullName>
    </alternativeName>
</protein>
<comment type="subunit">
    <text evidence="1">The basal body constitutes a major portion of the flagellar organelle and consists of four rings (L,P,S, and M) mounted on a central rod. The rod consists of about 26 subunits of FlgG in the distal portion, and FlgB, FlgC and FlgF are thought to build up the proximal portion of the rod with about 6 subunits each (By similarity).</text>
</comment>
<comment type="subcellular location">
    <subcellularLocation>
        <location evidence="1">Bacterial flagellum basal body</location>
    </subcellularLocation>
</comment>
<comment type="similarity">
    <text evidence="2">Belongs to the flagella basal body rod proteins family.</text>
</comment>
<proteinExistence type="inferred from homology"/>
<organism>
    <name type="scientific">Bacillus subtilis (strain 168)</name>
    <dbReference type="NCBI Taxonomy" id="224308"/>
    <lineage>
        <taxon>Bacteria</taxon>
        <taxon>Bacillati</taxon>
        <taxon>Bacillota</taxon>
        <taxon>Bacilli</taxon>
        <taxon>Bacillales</taxon>
        <taxon>Bacillaceae</taxon>
        <taxon>Bacillus</taxon>
    </lineage>
</organism>
<name>FLGG_BACSU</name>
<reference key="1">
    <citation type="journal article" date="1991" name="J. Bacteriol.">
        <title>The flaA locus of Bacillus subtilis is part of a large operon coding for flagellar structures, motility functions, and an ATPase-like polypeptide.</title>
        <authorList>
            <person name="Albertini A.M."/>
            <person name="Caramori T."/>
            <person name="Crabb W.D."/>
            <person name="Scoffone F."/>
            <person name="Galizzi A."/>
        </authorList>
    </citation>
    <scope>NUCLEOTIDE SEQUENCE [GENOMIC DNA]</scope>
    <source>
        <strain>168</strain>
    </source>
</reference>
<reference key="2">
    <citation type="journal article" date="1991" name="Gene">
        <title>Gene-protein relationships in the flagellar hook-basal body complex of Bacillus subtilis: sequences of the flgB, flgC, flgG, fliE and fliF genes.</title>
        <authorList>
            <person name="Zuberi A.R."/>
            <person name="Ying C."/>
            <person name="Bischoff D.S."/>
            <person name="Ordal G.W."/>
        </authorList>
    </citation>
    <scope>NUCLEOTIDE SEQUENCE [GENOMIC DNA]</scope>
</reference>
<reference key="3">
    <citation type="journal article" date="1997" name="Nature">
        <title>The complete genome sequence of the Gram-positive bacterium Bacillus subtilis.</title>
        <authorList>
            <person name="Kunst F."/>
            <person name="Ogasawara N."/>
            <person name="Moszer I."/>
            <person name="Albertini A.M."/>
            <person name="Alloni G."/>
            <person name="Azevedo V."/>
            <person name="Bertero M.G."/>
            <person name="Bessieres P."/>
            <person name="Bolotin A."/>
            <person name="Borchert S."/>
            <person name="Borriss R."/>
            <person name="Boursier L."/>
            <person name="Brans A."/>
            <person name="Braun M."/>
            <person name="Brignell S.C."/>
            <person name="Bron S."/>
            <person name="Brouillet S."/>
            <person name="Bruschi C.V."/>
            <person name="Caldwell B."/>
            <person name="Capuano V."/>
            <person name="Carter N.M."/>
            <person name="Choi S.-K."/>
            <person name="Codani J.-J."/>
            <person name="Connerton I.F."/>
            <person name="Cummings N.J."/>
            <person name="Daniel R.A."/>
            <person name="Denizot F."/>
            <person name="Devine K.M."/>
            <person name="Duesterhoeft A."/>
            <person name="Ehrlich S.D."/>
            <person name="Emmerson P.T."/>
            <person name="Entian K.-D."/>
            <person name="Errington J."/>
            <person name="Fabret C."/>
            <person name="Ferrari E."/>
            <person name="Foulger D."/>
            <person name="Fritz C."/>
            <person name="Fujita M."/>
            <person name="Fujita Y."/>
            <person name="Fuma S."/>
            <person name="Galizzi A."/>
            <person name="Galleron N."/>
            <person name="Ghim S.-Y."/>
            <person name="Glaser P."/>
            <person name="Goffeau A."/>
            <person name="Golightly E.J."/>
            <person name="Grandi G."/>
            <person name="Guiseppi G."/>
            <person name="Guy B.J."/>
            <person name="Haga K."/>
            <person name="Haiech J."/>
            <person name="Harwood C.R."/>
            <person name="Henaut A."/>
            <person name="Hilbert H."/>
            <person name="Holsappel S."/>
            <person name="Hosono S."/>
            <person name="Hullo M.-F."/>
            <person name="Itaya M."/>
            <person name="Jones L.-M."/>
            <person name="Joris B."/>
            <person name="Karamata D."/>
            <person name="Kasahara Y."/>
            <person name="Klaerr-Blanchard M."/>
            <person name="Klein C."/>
            <person name="Kobayashi Y."/>
            <person name="Koetter P."/>
            <person name="Koningstein G."/>
            <person name="Krogh S."/>
            <person name="Kumano M."/>
            <person name="Kurita K."/>
            <person name="Lapidus A."/>
            <person name="Lardinois S."/>
            <person name="Lauber J."/>
            <person name="Lazarevic V."/>
            <person name="Lee S.-M."/>
            <person name="Levine A."/>
            <person name="Liu H."/>
            <person name="Masuda S."/>
            <person name="Mauel C."/>
            <person name="Medigue C."/>
            <person name="Medina N."/>
            <person name="Mellado R.P."/>
            <person name="Mizuno M."/>
            <person name="Moestl D."/>
            <person name="Nakai S."/>
            <person name="Noback M."/>
            <person name="Noone D."/>
            <person name="O'Reilly M."/>
            <person name="Ogawa K."/>
            <person name="Ogiwara A."/>
            <person name="Oudega B."/>
            <person name="Park S.-H."/>
            <person name="Parro V."/>
            <person name="Pohl T.M."/>
            <person name="Portetelle D."/>
            <person name="Porwollik S."/>
            <person name="Prescott A.M."/>
            <person name="Presecan E."/>
            <person name="Pujic P."/>
            <person name="Purnelle B."/>
            <person name="Rapoport G."/>
            <person name="Rey M."/>
            <person name="Reynolds S."/>
            <person name="Rieger M."/>
            <person name="Rivolta C."/>
            <person name="Rocha E."/>
            <person name="Roche B."/>
            <person name="Rose M."/>
            <person name="Sadaie Y."/>
            <person name="Sato T."/>
            <person name="Scanlan E."/>
            <person name="Schleich S."/>
            <person name="Schroeter R."/>
            <person name="Scoffone F."/>
            <person name="Sekiguchi J."/>
            <person name="Sekowska A."/>
            <person name="Seror S.J."/>
            <person name="Serror P."/>
            <person name="Shin B.-S."/>
            <person name="Soldo B."/>
            <person name="Sorokin A."/>
            <person name="Tacconi E."/>
            <person name="Takagi T."/>
            <person name="Takahashi H."/>
            <person name="Takemaru K."/>
            <person name="Takeuchi M."/>
            <person name="Tamakoshi A."/>
            <person name="Tanaka T."/>
            <person name="Terpstra P."/>
            <person name="Tognoni A."/>
            <person name="Tosato V."/>
            <person name="Uchiyama S."/>
            <person name="Vandenbol M."/>
            <person name="Vannier F."/>
            <person name="Vassarotti A."/>
            <person name="Viari A."/>
            <person name="Wambutt R."/>
            <person name="Wedler E."/>
            <person name="Wedler H."/>
            <person name="Weitzenegger T."/>
            <person name="Winters P."/>
            <person name="Wipat A."/>
            <person name="Yamamoto H."/>
            <person name="Yamane K."/>
            <person name="Yasumoto K."/>
            <person name="Yata K."/>
            <person name="Yoshida K."/>
            <person name="Yoshikawa H.-F."/>
            <person name="Zumstein E."/>
            <person name="Yoshikawa H."/>
            <person name="Danchin A."/>
        </authorList>
    </citation>
    <scope>NUCLEOTIDE SEQUENCE [LARGE SCALE GENOMIC DNA]</scope>
    <source>
        <strain>168</strain>
    </source>
</reference>
<reference key="4">
    <citation type="journal article" date="2009" name="Microbiology">
        <title>From a consortium sequence to a unified sequence: the Bacillus subtilis 168 reference genome a decade later.</title>
        <authorList>
            <person name="Barbe V."/>
            <person name="Cruveiller S."/>
            <person name="Kunst F."/>
            <person name="Lenoble P."/>
            <person name="Meurice G."/>
            <person name="Sekowska A."/>
            <person name="Vallenet D."/>
            <person name="Wang T."/>
            <person name="Moszer I."/>
            <person name="Medigue C."/>
            <person name="Danchin A."/>
        </authorList>
    </citation>
    <scope>SEQUENCE REVISION TO 150</scope>
</reference>
<dbReference type="EMBL" id="X56049">
    <property type="protein sequence ID" value="CAA39528.1"/>
    <property type="molecule type" value="Genomic_DNA"/>
</dbReference>
<dbReference type="EMBL" id="M54965">
    <property type="status" value="NOT_ANNOTATED_CDS"/>
    <property type="molecule type" value="Genomic_DNA"/>
</dbReference>
<dbReference type="EMBL" id="M54966">
    <property type="protein sequence ID" value="AAA22444.1"/>
    <property type="molecule type" value="Genomic_DNA"/>
</dbReference>
<dbReference type="EMBL" id="AL009126">
    <property type="protein sequence ID" value="CAB13502.2"/>
    <property type="molecule type" value="Genomic_DNA"/>
</dbReference>
<dbReference type="PIR" id="G69622">
    <property type="entry name" value="G69622"/>
</dbReference>
<dbReference type="RefSeq" id="NP_389511.2">
    <property type="nucleotide sequence ID" value="NC_000964.3"/>
</dbReference>
<dbReference type="RefSeq" id="WP_003231968.1">
    <property type="nucleotide sequence ID" value="NZ_OZ025638.1"/>
</dbReference>
<dbReference type="SMR" id="P23446"/>
<dbReference type="FunCoup" id="P23446">
    <property type="interactions" value="150"/>
</dbReference>
<dbReference type="STRING" id="224308.BSU16290"/>
<dbReference type="jPOST" id="P23446"/>
<dbReference type="PaxDb" id="224308-BSU16290"/>
<dbReference type="DNASU" id="936497"/>
<dbReference type="EnsemblBacteria" id="CAB13502">
    <property type="protein sequence ID" value="CAB13502"/>
    <property type="gene ID" value="BSU_16290"/>
</dbReference>
<dbReference type="GeneID" id="936497"/>
<dbReference type="KEGG" id="bsu:BSU16290"/>
<dbReference type="PATRIC" id="fig|224308.179.peg.1769"/>
<dbReference type="eggNOG" id="COG4786">
    <property type="taxonomic scope" value="Bacteria"/>
</dbReference>
<dbReference type="InParanoid" id="P23446"/>
<dbReference type="OrthoDB" id="9804559at2"/>
<dbReference type="PhylomeDB" id="P23446"/>
<dbReference type="BioCyc" id="BSUB:BSU16290-MONOMER"/>
<dbReference type="Proteomes" id="UP000001570">
    <property type="component" value="Chromosome"/>
</dbReference>
<dbReference type="GO" id="GO:0009288">
    <property type="term" value="C:bacterial-type flagellum"/>
    <property type="evidence" value="ECO:0000318"/>
    <property type="project" value="GO_Central"/>
</dbReference>
<dbReference type="GO" id="GO:0030694">
    <property type="term" value="C:bacterial-type flagellum basal body, rod"/>
    <property type="evidence" value="ECO:0007669"/>
    <property type="project" value="InterPro"/>
</dbReference>
<dbReference type="GO" id="GO:0009424">
    <property type="term" value="C:bacterial-type flagellum hook"/>
    <property type="evidence" value="ECO:0000318"/>
    <property type="project" value="GO_Central"/>
</dbReference>
<dbReference type="GO" id="GO:0005829">
    <property type="term" value="C:cytosol"/>
    <property type="evidence" value="ECO:0000318"/>
    <property type="project" value="GO_Central"/>
</dbReference>
<dbReference type="GO" id="GO:0044780">
    <property type="term" value="P:bacterial-type flagellum assembly"/>
    <property type="evidence" value="ECO:0000315"/>
    <property type="project" value="CACAO"/>
</dbReference>
<dbReference type="GO" id="GO:0071978">
    <property type="term" value="P:bacterial-type flagellum-dependent swarming motility"/>
    <property type="evidence" value="ECO:0000315"/>
    <property type="project" value="CACAO"/>
</dbReference>
<dbReference type="InterPro" id="IPR001444">
    <property type="entry name" value="Flag_bb_rod_N"/>
</dbReference>
<dbReference type="InterPro" id="IPR019776">
    <property type="entry name" value="Flagellar_basal_body_rod_CS"/>
</dbReference>
<dbReference type="InterPro" id="IPR020013">
    <property type="entry name" value="Flagellar_FlgE/F/G"/>
</dbReference>
<dbReference type="InterPro" id="IPR010930">
    <property type="entry name" value="Flg_bb/hook_C_dom"/>
</dbReference>
<dbReference type="InterPro" id="IPR037925">
    <property type="entry name" value="FlgE/F/G-like"/>
</dbReference>
<dbReference type="InterPro" id="IPR012836">
    <property type="entry name" value="FlgF"/>
</dbReference>
<dbReference type="InterPro" id="IPR053967">
    <property type="entry name" value="LlgE_F_G-like_D1"/>
</dbReference>
<dbReference type="NCBIfam" id="TIGR03506">
    <property type="entry name" value="FlgEFG_subfam"/>
    <property type="match status" value="2"/>
</dbReference>
<dbReference type="NCBIfam" id="TIGR02490">
    <property type="entry name" value="flgF"/>
    <property type="match status" value="1"/>
</dbReference>
<dbReference type="NCBIfam" id="NF009278">
    <property type="entry name" value="PRK12636.1"/>
    <property type="match status" value="1"/>
</dbReference>
<dbReference type="PANTHER" id="PTHR30435:SF1">
    <property type="entry name" value="FLAGELLAR HOOK PROTEIN FLGE"/>
    <property type="match status" value="1"/>
</dbReference>
<dbReference type="PANTHER" id="PTHR30435">
    <property type="entry name" value="FLAGELLAR PROTEIN"/>
    <property type="match status" value="1"/>
</dbReference>
<dbReference type="Pfam" id="PF00460">
    <property type="entry name" value="Flg_bb_rod"/>
    <property type="match status" value="1"/>
</dbReference>
<dbReference type="Pfam" id="PF06429">
    <property type="entry name" value="Flg_bbr_C"/>
    <property type="match status" value="1"/>
</dbReference>
<dbReference type="Pfam" id="PF22692">
    <property type="entry name" value="LlgE_F_G_D1"/>
    <property type="match status" value="1"/>
</dbReference>
<dbReference type="SUPFAM" id="SSF117143">
    <property type="entry name" value="Flagellar hook protein flgE"/>
    <property type="match status" value="1"/>
</dbReference>
<dbReference type="PROSITE" id="PS00588">
    <property type="entry name" value="FLAGELLA_BB_ROD"/>
    <property type="match status" value="1"/>
</dbReference>
<sequence>MLRSLYSGISGMKNFQTKLDVIGNNIANVNTVGFKKSRVTFKDMVSQTIAGGSAAGATIGGTNSKQIGLGSSSGTIDTIHSTSATQSTGRTLDLAIDGDGYFRIDTGDGTAYTRAGNFYLDNTGTLVTGDGYHVLNMNGGTIKIPTDAQSFSIGSDGKVSIVDAEGKTQDGGQIGIVTFANSDGLDKIGSNLYRESLNSGTASAANQPGDGGTGALKSGFLEMSNVDLTDEFTEMIVAQRGFQSNSKIITTSDEILQELVNLKR</sequence>